<keyword id="KW-0009">Actin-binding</keyword>
<keyword id="KW-0020">Allergen</keyword>
<keyword id="KW-0963">Cytoplasm</keyword>
<keyword id="KW-0206">Cytoskeleton</keyword>
<keyword id="KW-0903">Direct protein sequencing</keyword>
<proteinExistence type="evidence at protein level"/>
<accession>P85984</accession>
<sequence length="23" mass="2521">YMVIQGEPGAVIRLGDYLIDQGL</sequence>
<protein>
    <recommendedName>
        <fullName evidence="1">Profilin</fullName>
    </recommendedName>
    <alternativeName>
        <fullName evidence="4">Pollen allergen Beta v 2</fullName>
    </alternativeName>
    <allergenName evidence="4">Beta v 2</allergenName>
</protein>
<reference key="1">
    <citation type="journal article" date="2008" name="Clin. Mol. Allergy">
        <title>The identification of allergen proteins in sugar beet (Beta vulgaris) pollen causing occupational allergy in greenhouses.</title>
        <authorList>
            <person name="Luoto S."/>
            <person name="Lambert W."/>
            <person name="Blomqvist A."/>
            <person name="Emanuelsson C."/>
        </authorList>
    </citation>
    <scope>PROTEIN SEQUENCE</scope>
    <scope>ALLERGEN</scope>
    <source>
        <tissue>Pollen</tissue>
    </source>
</reference>
<name>PROF_BETVU</name>
<evidence type="ECO:0000250" key="1">
    <source>
        <dbReference type="UniProtKB" id="P25816"/>
    </source>
</evidence>
<evidence type="ECO:0000255" key="2"/>
<evidence type="ECO:0000269" key="3">
    <source>
    </source>
</evidence>
<evidence type="ECO:0000303" key="4">
    <source>
    </source>
</evidence>
<evidence type="ECO:0000305" key="5"/>
<feature type="chain" id="PRO_0000349146" description="Profilin">
    <location>
        <begin position="1" status="less than"/>
        <end position="23" status="greater than"/>
    </location>
</feature>
<feature type="non-consecutive residues" evidence="4">
    <location>
        <begin position="13"/>
        <end position="14"/>
    </location>
</feature>
<feature type="non-terminal residue" evidence="4">
    <location>
        <position position="1"/>
    </location>
</feature>
<feature type="non-terminal residue" evidence="4">
    <location>
        <position position="23"/>
    </location>
</feature>
<dbReference type="Allergome" id="5799">
    <property type="allergen name" value="Beta v 2"/>
</dbReference>
<dbReference type="Allergome" id="5815">
    <property type="allergen name" value="Beta v 2.0101"/>
</dbReference>
<dbReference type="GO" id="GO:0005737">
    <property type="term" value="C:cytoplasm"/>
    <property type="evidence" value="ECO:0007669"/>
    <property type="project" value="UniProtKB-KW"/>
</dbReference>
<dbReference type="GO" id="GO:0005856">
    <property type="term" value="C:cytoskeleton"/>
    <property type="evidence" value="ECO:0007669"/>
    <property type="project" value="UniProtKB-SubCell"/>
</dbReference>
<dbReference type="GO" id="GO:0003779">
    <property type="term" value="F:actin binding"/>
    <property type="evidence" value="ECO:0007669"/>
    <property type="project" value="UniProtKB-KW"/>
</dbReference>
<comment type="function">
    <text evidence="1">Binds to actin and affects the structure of the cytoskeleton. At high concentrations, profilin prevents the polymerization of actin, whereas it enhances it at low concentrations. By binding to PIP2, it inhibits the formation of IP3 and DG (By similarity).</text>
</comment>
<comment type="subunit">
    <text evidence="5">Occurs in many kinds of cells as a complex with monomeric actin in a 1:1 ratio.</text>
</comment>
<comment type="subcellular location">
    <subcellularLocation>
        <location evidence="1">Cytoplasm</location>
        <location evidence="1">Cytoskeleton</location>
    </subcellularLocation>
</comment>
<comment type="allergen">
    <text evidence="3">Causes an allergic reaction in human. Binds to IgE.</text>
</comment>
<comment type="miscellaneous">
    <text evidence="3">On the 2D-gel the determined pI of this protein is: 4.5, its MW is: 14 kDa.</text>
</comment>
<comment type="similarity">
    <text evidence="2">Belongs to the profilin family.</text>
</comment>
<organism>
    <name type="scientific">Beta vulgaris</name>
    <name type="common">Sugar beet</name>
    <dbReference type="NCBI Taxonomy" id="161934"/>
    <lineage>
        <taxon>Eukaryota</taxon>
        <taxon>Viridiplantae</taxon>
        <taxon>Streptophyta</taxon>
        <taxon>Embryophyta</taxon>
        <taxon>Tracheophyta</taxon>
        <taxon>Spermatophyta</taxon>
        <taxon>Magnoliopsida</taxon>
        <taxon>eudicotyledons</taxon>
        <taxon>Gunneridae</taxon>
        <taxon>Pentapetalae</taxon>
        <taxon>Caryophyllales</taxon>
        <taxon>Chenopodiaceae</taxon>
        <taxon>Betoideae</taxon>
        <taxon>Beta</taxon>
    </lineage>
</organism>